<organism>
    <name type="scientific">Mycobacterium sp. (strain MCS)</name>
    <dbReference type="NCBI Taxonomy" id="164756"/>
    <lineage>
        <taxon>Bacteria</taxon>
        <taxon>Bacillati</taxon>
        <taxon>Actinomycetota</taxon>
        <taxon>Actinomycetes</taxon>
        <taxon>Mycobacteriales</taxon>
        <taxon>Mycobacteriaceae</taxon>
        <taxon>Mycobacterium</taxon>
    </lineage>
</organism>
<proteinExistence type="inferred from homology"/>
<evidence type="ECO:0000255" key="1">
    <source>
        <dbReference type="HAMAP-Rule" id="MF_01035"/>
    </source>
</evidence>
<keyword id="KW-0028">Amino-acid biosynthesis</keyword>
<keyword id="KW-0100">Branched-chain amino acid biosynthesis</keyword>
<keyword id="KW-0963">Cytoplasm</keyword>
<keyword id="KW-0432">Leucine biosynthesis</keyword>
<keyword id="KW-0460">Magnesium</keyword>
<keyword id="KW-0464">Manganese</keyword>
<keyword id="KW-0479">Metal-binding</keyword>
<keyword id="KW-0520">NAD</keyword>
<keyword id="KW-0560">Oxidoreductase</keyword>
<name>LEU3_MYCSS</name>
<sequence>MNLAIIAGDGIGPEVIGEAVKVLDAVLPEVEKTTYDLGARRYHATGEILPDSVLEELKVHDAILLGAIGDPSVPSGVLERGLLLRIRFALDHHINLRPAKLYSGVTGPLAGNPEIDFVVVREGTEGPYTGTGGAIRVGTPHEVATEVSLNTAFGVRRVVEDAFRRAQQRRKHLTLVHKNNVLTFAGALWWRTVQEVGAEYPDVEIAYQHVDSAMIHIVTDPGRFDVIVTDNLFGDIVTDLAAAVCGGIGLAASGNIDATRTNPSMFEPVHGSAPDIAGQGIADPTAAIMSVALLLAHVGETDAAARVDKAVEAHLSSRGDQELGTAAVGDRIVGLL</sequence>
<feature type="chain" id="PRO_1000063875" description="3-isopropylmalate dehydrogenase">
    <location>
        <begin position="1"/>
        <end position="336"/>
    </location>
</feature>
<feature type="binding site" evidence="1">
    <location>
        <position position="87"/>
    </location>
    <ligand>
        <name>substrate</name>
    </ligand>
</feature>
<feature type="binding site" evidence="1">
    <location>
        <position position="97"/>
    </location>
    <ligand>
        <name>substrate</name>
    </ligand>
</feature>
<feature type="binding site" evidence="1">
    <location>
        <position position="121"/>
    </location>
    <ligand>
        <name>substrate</name>
    </ligand>
</feature>
<feature type="binding site" evidence="1">
    <location>
        <position position="211"/>
    </location>
    <ligand>
        <name>Mg(2+)</name>
        <dbReference type="ChEBI" id="CHEBI:18420"/>
    </ligand>
</feature>
<feature type="binding site" evidence="1">
    <location>
        <position position="211"/>
    </location>
    <ligand>
        <name>substrate</name>
    </ligand>
</feature>
<feature type="binding site" evidence="1">
    <location>
        <position position="235"/>
    </location>
    <ligand>
        <name>Mg(2+)</name>
        <dbReference type="ChEBI" id="CHEBI:18420"/>
    </ligand>
</feature>
<feature type="binding site" evidence="1">
    <location>
        <position position="239"/>
    </location>
    <ligand>
        <name>Mg(2+)</name>
        <dbReference type="ChEBI" id="CHEBI:18420"/>
    </ligand>
</feature>
<feature type="binding site" evidence="1">
    <location>
        <begin position="271"/>
        <end position="283"/>
    </location>
    <ligand>
        <name>NAD(+)</name>
        <dbReference type="ChEBI" id="CHEBI:57540"/>
    </ligand>
</feature>
<feature type="site" description="Important for catalysis" evidence="1">
    <location>
        <position position="128"/>
    </location>
</feature>
<feature type="site" description="Important for catalysis" evidence="1">
    <location>
        <position position="178"/>
    </location>
</feature>
<accession>Q1BAR4</accession>
<reference key="1">
    <citation type="submission" date="2006-06" db="EMBL/GenBank/DDBJ databases">
        <title>Complete sequence of chromosome of Mycobacterium sp. MCS.</title>
        <authorList>
            <consortium name="US DOE Joint Genome Institute"/>
            <person name="Copeland A."/>
            <person name="Lucas S."/>
            <person name="Lapidus A."/>
            <person name="Barry K."/>
            <person name="Detter J.C."/>
            <person name="Glavina del Rio T."/>
            <person name="Hammon N."/>
            <person name="Israni S."/>
            <person name="Dalin E."/>
            <person name="Tice H."/>
            <person name="Pitluck S."/>
            <person name="Martinez M."/>
            <person name="Schmutz J."/>
            <person name="Larimer F."/>
            <person name="Land M."/>
            <person name="Hauser L."/>
            <person name="Kyrpides N."/>
            <person name="Kim E."/>
            <person name="Miller C.D."/>
            <person name="Hughes J.E."/>
            <person name="Anderson A.J."/>
            <person name="Sims R.C."/>
            <person name="Richardson P."/>
        </authorList>
    </citation>
    <scope>NUCLEOTIDE SEQUENCE [LARGE SCALE GENOMIC DNA]</scope>
    <source>
        <strain>MCS</strain>
    </source>
</reference>
<dbReference type="EC" id="1.1.1.85" evidence="1"/>
<dbReference type="EMBL" id="CP000384">
    <property type="protein sequence ID" value="ABG08020.1"/>
    <property type="molecule type" value="Genomic_DNA"/>
</dbReference>
<dbReference type="SMR" id="Q1BAR4"/>
<dbReference type="KEGG" id="mmc:Mmcs_1911"/>
<dbReference type="HOGENOM" id="CLU_031953_0_1_11"/>
<dbReference type="BioCyc" id="MSP164756:G1G6O-1953-MONOMER"/>
<dbReference type="UniPathway" id="UPA00048">
    <property type="reaction ID" value="UER00072"/>
</dbReference>
<dbReference type="GO" id="GO:0005737">
    <property type="term" value="C:cytoplasm"/>
    <property type="evidence" value="ECO:0007669"/>
    <property type="project" value="UniProtKB-SubCell"/>
</dbReference>
<dbReference type="GO" id="GO:0003862">
    <property type="term" value="F:3-isopropylmalate dehydrogenase activity"/>
    <property type="evidence" value="ECO:0007669"/>
    <property type="project" value="UniProtKB-UniRule"/>
</dbReference>
<dbReference type="GO" id="GO:0000287">
    <property type="term" value="F:magnesium ion binding"/>
    <property type="evidence" value="ECO:0007669"/>
    <property type="project" value="InterPro"/>
</dbReference>
<dbReference type="GO" id="GO:0051287">
    <property type="term" value="F:NAD binding"/>
    <property type="evidence" value="ECO:0007669"/>
    <property type="project" value="InterPro"/>
</dbReference>
<dbReference type="GO" id="GO:0009098">
    <property type="term" value="P:L-leucine biosynthetic process"/>
    <property type="evidence" value="ECO:0007669"/>
    <property type="project" value="UniProtKB-UniRule"/>
</dbReference>
<dbReference type="Gene3D" id="3.40.718.10">
    <property type="entry name" value="Isopropylmalate Dehydrogenase"/>
    <property type="match status" value="1"/>
</dbReference>
<dbReference type="HAMAP" id="MF_01035">
    <property type="entry name" value="LeuB_type2"/>
    <property type="match status" value="1"/>
</dbReference>
<dbReference type="InterPro" id="IPR050501">
    <property type="entry name" value="ICDH/IPMDH"/>
</dbReference>
<dbReference type="InterPro" id="IPR019818">
    <property type="entry name" value="IsoCit/isopropylmalate_DH_CS"/>
</dbReference>
<dbReference type="InterPro" id="IPR024084">
    <property type="entry name" value="IsoPropMal-DH-like_dom"/>
</dbReference>
<dbReference type="InterPro" id="IPR023698">
    <property type="entry name" value="LeuB_actb"/>
</dbReference>
<dbReference type="NCBIfam" id="NF002898">
    <property type="entry name" value="PRK03437.1"/>
    <property type="match status" value="1"/>
</dbReference>
<dbReference type="PANTHER" id="PTHR43275">
    <property type="entry name" value="D-MALATE DEHYDROGENASE [DECARBOXYLATING]"/>
    <property type="match status" value="1"/>
</dbReference>
<dbReference type="PANTHER" id="PTHR43275:SF1">
    <property type="entry name" value="D-MALATE DEHYDROGENASE [DECARBOXYLATING]"/>
    <property type="match status" value="1"/>
</dbReference>
<dbReference type="Pfam" id="PF00180">
    <property type="entry name" value="Iso_dh"/>
    <property type="match status" value="1"/>
</dbReference>
<dbReference type="SMART" id="SM01329">
    <property type="entry name" value="Iso_dh"/>
    <property type="match status" value="1"/>
</dbReference>
<dbReference type="SUPFAM" id="SSF53659">
    <property type="entry name" value="Isocitrate/Isopropylmalate dehydrogenase-like"/>
    <property type="match status" value="1"/>
</dbReference>
<dbReference type="PROSITE" id="PS00470">
    <property type="entry name" value="IDH_IMDH"/>
    <property type="match status" value="1"/>
</dbReference>
<gene>
    <name evidence="1" type="primary">leuB</name>
    <name type="ordered locus">Mmcs_1911</name>
</gene>
<comment type="function">
    <text evidence="1">Catalyzes the oxidation of 3-carboxy-2-hydroxy-4-methylpentanoate (3-isopropylmalate) to 3-carboxy-4-methyl-2-oxopentanoate. The product decarboxylates to 4-methyl-2 oxopentanoate.</text>
</comment>
<comment type="catalytic activity">
    <reaction evidence="1">
        <text>(2R,3S)-3-isopropylmalate + NAD(+) = 4-methyl-2-oxopentanoate + CO2 + NADH</text>
        <dbReference type="Rhea" id="RHEA:32271"/>
        <dbReference type="ChEBI" id="CHEBI:16526"/>
        <dbReference type="ChEBI" id="CHEBI:17865"/>
        <dbReference type="ChEBI" id="CHEBI:35121"/>
        <dbReference type="ChEBI" id="CHEBI:57540"/>
        <dbReference type="ChEBI" id="CHEBI:57945"/>
        <dbReference type="EC" id="1.1.1.85"/>
    </reaction>
</comment>
<comment type="cofactor">
    <cofactor evidence="1">
        <name>Mg(2+)</name>
        <dbReference type="ChEBI" id="CHEBI:18420"/>
    </cofactor>
    <cofactor evidence="1">
        <name>Mn(2+)</name>
        <dbReference type="ChEBI" id="CHEBI:29035"/>
    </cofactor>
    <text evidence="1">Binds 1 Mg(2+) or Mn(2+) ion per subunit.</text>
</comment>
<comment type="pathway">
    <text evidence="1">Amino-acid biosynthesis; L-leucine biosynthesis; L-leucine from 3-methyl-2-oxobutanoate: step 3/4.</text>
</comment>
<comment type="subunit">
    <text evidence="1">Homodimer.</text>
</comment>
<comment type="subcellular location">
    <subcellularLocation>
        <location evidence="1">Cytoplasm</location>
    </subcellularLocation>
</comment>
<comment type="similarity">
    <text evidence="1">Belongs to the isocitrate and isopropylmalate dehydrogenases family. LeuB type 2 subfamily.</text>
</comment>
<protein>
    <recommendedName>
        <fullName evidence="1">3-isopropylmalate dehydrogenase</fullName>
        <ecNumber evidence="1">1.1.1.85</ecNumber>
    </recommendedName>
    <alternativeName>
        <fullName evidence="1">3-IPM-DH</fullName>
    </alternativeName>
    <alternativeName>
        <fullName evidence="1">Beta-IPM dehydrogenase</fullName>
        <shortName evidence="1">IMDH</shortName>
    </alternativeName>
</protein>